<comment type="function">
    <text evidence="2 3 6">Bifunctional enzyme that catalyzes amidation of the C-terminus of proteins (By similarity). Alpha-amidation is present at the C-terminus of many endocrine hormones and neuropeptides and is required for their activity (By similarity). C-terminal amidation also takes place in response to protein fragmentation triggered by oxidative stress, promoting degradation of amidated protein fragments by the proteasome (By similarity). Alpha-amidation involves two sequential reactions, both of which are catalyzed by separate catalytic domains of the enzyme (By similarity). The first step, catalyzed by peptidyl alpha-hydroxylating monooxygenase (PHM) domain, is the copper-, ascorbate-, and O2- dependent stereospecific hydroxylation (with S stereochemistry) at the alpha-carbon (C-alpha) of the C-terminal glycine of the peptidylglycine substrate (By similarity). The second step, catalyzed by the peptidylglycine amidoglycolate lyase (PAL) domain, is the zinc-dependent cleavage of the N-C-alpha bond, producing the alpha-amidated peptide and glyoxylate (PubMed:1935950).</text>
</comment>
<comment type="catalytic activity">
    <reaction evidence="2">
        <text>a [peptide]-C-terminal glycine + 2 L-ascorbate + O2 = a [peptide]-C-terminal (2S)-2-hydroxyglycine + 2 monodehydro-L-ascorbate radical + H2O</text>
        <dbReference type="Rhea" id="RHEA:21452"/>
        <dbReference type="Rhea" id="RHEA-COMP:13486"/>
        <dbReference type="Rhea" id="RHEA-COMP:15321"/>
        <dbReference type="ChEBI" id="CHEBI:15377"/>
        <dbReference type="ChEBI" id="CHEBI:15379"/>
        <dbReference type="ChEBI" id="CHEBI:38290"/>
        <dbReference type="ChEBI" id="CHEBI:59513"/>
        <dbReference type="ChEBI" id="CHEBI:137000"/>
        <dbReference type="ChEBI" id="CHEBI:142768"/>
        <dbReference type="EC" id="1.14.17.3"/>
    </reaction>
</comment>
<comment type="catalytic activity">
    <reaction evidence="2">
        <text>a [peptide]-C-terminal (2S)-2-hydroxyglycine = a [peptide]-C-terminal amide + glyoxylate</text>
        <dbReference type="Rhea" id="RHEA:20924"/>
        <dbReference type="Rhea" id="RHEA-COMP:13485"/>
        <dbReference type="Rhea" id="RHEA-COMP:15321"/>
        <dbReference type="ChEBI" id="CHEBI:36655"/>
        <dbReference type="ChEBI" id="CHEBI:137001"/>
        <dbReference type="ChEBI" id="CHEBI:142768"/>
        <dbReference type="EC" id="4.3.2.5"/>
    </reaction>
</comment>
<comment type="cofactor">
    <cofactor evidence="2">
        <name>Zn(2+)</name>
        <dbReference type="ChEBI" id="CHEBI:29105"/>
    </cofactor>
    <text evidence="2">Binds one Zn(2+) ion per subunit.</text>
</comment>
<comment type="cofactor">
    <cofactor evidence="2">
        <name>Cu(2+)</name>
        <dbReference type="ChEBI" id="CHEBI:29036"/>
    </cofactor>
    <text evidence="2">Binds 2 Cu(2+) ions per subunit.</text>
</comment>
<comment type="subunit">
    <text evidence="2">Monomer.</text>
</comment>
<comment type="subcellular location">
    <subcellularLocation>
        <location evidence="1">Cytoplasmic vesicle</location>
        <location evidence="1">Secretory vesicle membrane</location>
        <topology evidence="1">Single-pass membrane protein</topology>
    </subcellularLocation>
    <text evidence="1">Secretory granules.</text>
</comment>
<comment type="alternative products">
    <event type="alternative splicing"/>
    <isoform>
        <id>P08478-1</id>
        <name>1</name>
        <name>AE-III</name>
        <sequence type="displayed"/>
    </isoform>
    <isoform>
        <id>P08478-2</id>
        <name>2</name>
        <name>AE-I</name>
        <sequence type="described" ref="VSP_020312 VSP_020313"/>
    </isoform>
</comment>
<comment type="similarity">
    <text evidence="9">In the C-terminal section; belongs to the peptidyl-alpha-hydroxyglycine alpha-amidating lyase family.</text>
</comment>
<comment type="similarity">
    <text evidence="9">In the N-terminal section; belongs to the copper type II ascorbate-dependent monooxygenase family.</text>
</comment>
<gene>
    <name type="primary">pam-a</name>
</gene>
<organism>
    <name type="scientific">Xenopus laevis</name>
    <name type="common">African clawed frog</name>
    <dbReference type="NCBI Taxonomy" id="8355"/>
    <lineage>
        <taxon>Eukaryota</taxon>
        <taxon>Metazoa</taxon>
        <taxon>Chordata</taxon>
        <taxon>Craniata</taxon>
        <taxon>Vertebrata</taxon>
        <taxon>Euteleostomi</taxon>
        <taxon>Amphibia</taxon>
        <taxon>Batrachia</taxon>
        <taxon>Anura</taxon>
        <taxon>Pipoidea</taxon>
        <taxon>Pipidae</taxon>
        <taxon>Xenopodinae</taxon>
        <taxon>Xenopus</taxon>
        <taxon>Xenopus</taxon>
    </lineage>
</organism>
<accession>P08478</accession>
<accession>B7ZR22</accession>
<accession>Q5D0B6</accession>
<accession>Q91697</accession>
<reference key="1">
    <citation type="journal article" date="1987" name="Biochem. Biophys. Res. Commun.">
        <title>Cloning and sequence of cDNA encoding a peptide C-terminal alpha-amidating enzyme from Xenopus laevis.</title>
        <authorList>
            <person name="Mizuno K."/>
            <person name="Ohsuye K."/>
            <person name="Wada Y."/>
            <person name="Fuchimura K."/>
            <person name="Tanaka S."/>
            <person name="Matsuo H."/>
        </authorList>
    </citation>
    <scope>NUCLEOTIDE SEQUENCE [MRNA] (ISOFORM 2)</scope>
    <scope>PARTIAL PROTEIN SEQUENCE</scope>
</reference>
<reference key="2">
    <citation type="journal article" date="1991" name="Eur. J. Biochem.">
        <title>Purification and cDNA cloning of Xenopus laevis skin peptidylhydroxyglycine N-C lyase, catalyzing the second reaction of C-terminal alpha-amidation.</title>
        <authorList>
            <person name="Iwasaki Y."/>
            <person name="Kawahara T."/>
            <person name="Shimoi H."/>
            <person name="Suzuki K."/>
            <person name="Ghisalba O."/>
            <person name="Kangawa K."/>
            <person name="Matsuo H."/>
            <person name="Nishikawa Y."/>
        </authorList>
    </citation>
    <scope>NUCLEOTIDE SEQUENCE [MRNA] (ISOFORM 1)</scope>
    <scope>PARTIAL PROTEIN SEQUENCE</scope>
    <scope>FUNCTION</scope>
    <source>
        <tissue>Skin</tissue>
    </source>
</reference>
<reference key="3">
    <citation type="submission" date="2008-11" db="EMBL/GenBank/DDBJ databases">
        <authorList>
            <consortium name="NIH - Xenopus Gene Collection (XGC) project"/>
        </authorList>
    </citation>
    <scope>NUCLEOTIDE SEQUENCE [LARGE SCALE MRNA] (ISOFORMS 1 AND 2)</scope>
    <source>
        <tissue>Gastrula</tissue>
        <tissue>Tail bud</tissue>
    </source>
</reference>
<dbReference type="EC" id="1.14.17.3" evidence="2"/>
<dbReference type="EC" id="4.3.2.5"/>
<dbReference type="EMBL" id="M18134">
    <property type="protein sequence ID" value="AAA49640.1"/>
    <property type="molecule type" value="mRNA"/>
</dbReference>
<dbReference type="EMBL" id="X62771">
    <property type="protein sequence ID" value="CAA44615.1"/>
    <property type="molecule type" value="mRNA"/>
</dbReference>
<dbReference type="EMBL" id="BC043987">
    <property type="protein sequence ID" value="AAH43987.1"/>
    <property type="molecule type" value="mRNA"/>
</dbReference>
<dbReference type="EMBL" id="BC170012">
    <property type="protein sequence ID" value="AAI70012.1"/>
    <property type="molecule type" value="mRNA"/>
</dbReference>
<dbReference type="EMBL" id="BC170016">
    <property type="protein sequence ID" value="AAI70016.1"/>
    <property type="molecule type" value="mRNA"/>
</dbReference>
<dbReference type="PIR" id="A29726">
    <property type="entry name" value="URXLA1"/>
</dbReference>
<dbReference type="PIR" id="S17855">
    <property type="entry name" value="S17855"/>
</dbReference>
<dbReference type="RefSeq" id="NP_001079520.2">
    <property type="nucleotide sequence ID" value="NM_001086051.2"/>
</dbReference>
<dbReference type="SMR" id="P08478"/>
<dbReference type="GlyCosmos" id="P08478">
    <property type="glycosylation" value="2 sites, No reported glycans"/>
</dbReference>
<dbReference type="GeneID" id="379207"/>
<dbReference type="KEGG" id="xla:379207"/>
<dbReference type="AGR" id="Xenbase:XB-GENE-950939"/>
<dbReference type="CTD" id="379207"/>
<dbReference type="Xenbase" id="XB-GENE-950939">
    <property type="gene designation" value="pam.L"/>
</dbReference>
<dbReference type="OrthoDB" id="10018185at2759"/>
<dbReference type="Proteomes" id="UP000186698">
    <property type="component" value="Chromosome 1L"/>
</dbReference>
<dbReference type="Bgee" id="379207">
    <property type="expression patterns" value="Expressed in brain and 20 other cell types or tissues"/>
</dbReference>
<dbReference type="GO" id="GO:0005576">
    <property type="term" value="C:extracellular region"/>
    <property type="evidence" value="ECO:0000318"/>
    <property type="project" value="GO_Central"/>
</dbReference>
<dbReference type="GO" id="GO:0030658">
    <property type="term" value="C:transport vesicle membrane"/>
    <property type="evidence" value="ECO:0007669"/>
    <property type="project" value="UniProtKB-SubCell"/>
</dbReference>
<dbReference type="GO" id="GO:0005507">
    <property type="term" value="F:copper ion binding"/>
    <property type="evidence" value="ECO:0007669"/>
    <property type="project" value="InterPro"/>
</dbReference>
<dbReference type="GO" id="GO:0004598">
    <property type="term" value="F:peptidylamidoglycolate lyase activity"/>
    <property type="evidence" value="ECO:0007669"/>
    <property type="project" value="UniProtKB-EC"/>
</dbReference>
<dbReference type="GO" id="GO:0004504">
    <property type="term" value="F:peptidylglycine monooxygenase activity"/>
    <property type="evidence" value="ECO:0000318"/>
    <property type="project" value="GO_Central"/>
</dbReference>
<dbReference type="GO" id="GO:0006518">
    <property type="term" value="P:peptide metabolic process"/>
    <property type="evidence" value="ECO:0007669"/>
    <property type="project" value="InterPro"/>
</dbReference>
<dbReference type="CDD" id="cd14958">
    <property type="entry name" value="NHL_PAL_like"/>
    <property type="match status" value="1"/>
</dbReference>
<dbReference type="FunFam" id="2.60.120.230:FF:000002">
    <property type="entry name" value="Peptidyl-glycine alpha-amidating monooxygenase B"/>
    <property type="match status" value="1"/>
</dbReference>
<dbReference type="FunFam" id="2.120.10.30:FF:000016">
    <property type="entry name" value="peptidyl-glycine alpha-amidating monooxygenase isoform X1"/>
    <property type="match status" value="1"/>
</dbReference>
<dbReference type="FunFam" id="2.60.120.310:FF:000001">
    <property type="entry name" value="peptidyl-glycine alpha-amidating monooxygenase isoform X1"/>
    <property type="match status" value="1"/>
</dbReference>
<dbReference type="Gene3D" id="2.60.120.230">
    <property type="match status" value="1"/>
</dbReference>
<dbReference type="Gene3D" id="2.60.120.310">
    <property type="entry name" value="Copper type II, ascorbate-dependent monooxygenase, N-terminal domain"/>
    <property type="match status" value="1"/>
</dbReference>
<dbReference type="Gene3D" id="2.120.10.30">
    <property type="entry name" value="TolB, C-terminal domain"/>
    <property type="match status" value="1"/>
</dbReference>
<dbReference type="InterPro" id="IPR011042">
    <property type="entry name" value="6-blade_b-propeller_TolB-like"/>
</dbReference>
<dbReference type="InterPro" id="IPR014784">
    <property type="entry name" value="Cu2_ascorb_mOase-like_C"/>
</dbReference>
<dbReference type="InterPro" id="IPR020611">
    <property type="entry name" value="Cu2_ascorb_mOase_CS-1"/>
</dbReference>
<dbReference type="InterPro" id="IPR014783">
    <property type="entry name" value="Cu2_ascorb_mOase_CS-2"/>
</dbReference>
<dbReference type="InterPro" id="IPR000323">
    <property type="entry name" value="Cu2_ascorb_mOase_N"/>
</dbReference>
<dbReference type="InterPro" id="IPR036939">
    <property type="entry name" value="Cu2_ascorb_mOase_N_sf"/>
</dbReference>
<dbReference type="InterPro" id="IPR024548">
    <property type="entry name" value="Cu2_monoox_C"/>
</dbReference>
<dbReference type="InterPro" id="IPR001258">
    <property type="entry name" value="NHL_repeat"/>
</dbReference>
<dbReference type="InterPro" id="IPR000720">
    <property type="entry name" value="PHM/PAL"/>
</dbReference>
<dbReference type="InterPro" id="IPR008977">
    <property type="entry name" value="PHM/PNGase_F_dom_sf"/>
</dbReference>
<dbReference type="PANTHER" id="PTHR10680">
    <property type="entry name" value="PEPTIDYL-GLYCINE ALPHA-AMIDATING MONOOXYGENASE"/>
    <property type="match status" value="1"/>
</dbReference>
<dbReference type="PANTHER" id="PTHR10680:SF14">
    <property type="entry name" value="PEPTIDYL-GLYCINE ALPHA-AMIDATING MONOOXYGENASE"/>
    <property type="match status" value="1"/>
</dbReference>
<dbReference type="Pfam" id="PF03712">
    <property type="entry name" value="Cu2_monoox_C"/>
    <property type="match status" value="1"/>
</dbReference>
<dbReference type="Pfam" id="PF01082">
    <property type="entry name" value="Cu2_monooxygen"/>
    <property type="match status" value="1"/>
</dbReference>
<dbReference type="Pfam" id="PF01436">
    <property type="entry name" value="NHL"/>
    <property type="match status" value="3"/>
</dbReference>
<dbReference type="PRINTS" id="PR00790">
    <property type="entry name" value="PAMONOXGNASE"/>
</dbReference>
<dbReference type="SUPFAM" id="SSF101898">
    <property type="entry name" value="NHL repeat"/>
    <property type="match status" value="1"/>
</dbReference>
<dbReference type="SUPFAM" id="SSF49742">
    <property type="entry name" value="PHM/PNGase F"/>
    <property type="match status" value="2"/>
</dbReference>
<dbReference type="PROSITE" id="PS00084">
    <property type="entry name" value="CU2_MONOOXYGENASE_1"/>
    <property type="match status" value="1"/>
</dbReference>
<dbReference type="PROSITE" id="PS00085">
    <property type="entry name" value="CU2_MONOOXYGENASE_2"/>
    <property type="match status" value="1"/>
</dbReference>
<dbReference type="PROSITE" id="PS51125">
    <property type="entry name" value="NHL"/>
    <property type="match status" value="4"/>
</dbReference>
<feature type="signal peptide" evidence="4">
    <location>
        <begin position="1"/>
        <end position="36"/>
    </location>
</feature>
<feature type="chain" id="PRO_0000006367" description="Peptidyl-glycine alpha-amidating monooxygenase A">
    <location>
        <begin position="37"/>
        <end position="935"/>
    </location>
</feature>
<feature type="topological domain" description="Intragranular" evidence="4">
    <location>
        <begin position="37"/>
        <end position="825"/>
    </location>
</feature>
<feature type="transmembrane region" description="Helical" evidence="4">
    <location>
        <begin position="826"/>
        <end position="846"/>
    </location>
</feature>
<feature type="topological domain" description="Cytoplasmic" evidence="4">
    <location>
        <begin position="847"/>
        <end position="935"/>
    </location>
</feature>
<feature type="repeat" description="NHL 1">
    <location>
        <begin position="463"/>
        <end position="504"/>
    </location>
</feature>
<feature type="repeat" description="NHL 2">
    <location>
        <begin position="512"/>
        <end position="557"/>
    </location>
</feature>
<feature type="repeat" description="NHL 3">
    <location>
        <begin position="565"/>
        <end position="609"/>
    </location>
</feature>
<feature type="repeat" description="NHL 4">
    <location>
        <begin position="662"/>
        <end position="705"/>
    </location>
</feature>
<feature type="region of interest" description="Peptidylglycine alpha-hydroxylating monooxygenase" evidence="2">
    <location>
        <begin position="1"/>
        <end position="390"/>
    </location>
</feature>
<feature type="region of interest" description="Disordered" evidence="5">
    <location>
        <begin position="362"/>
        <end position="385"/>
    </location>
</feature>
<feature type="region of interest" description="Peptidyl-alpha-hydroxyglycine alpha-amidating lyase" evidence="2">
    <location>
        <begin position="391"/>
        <end position="712"/>
    </location>
</feature>
<feature type="region of interest" description="Disordered" evidence="5">
    <location>
        <begin position="728"/>
        <end position="764"/>
    </location>
</feature>
<feature type="region of interest" description="Disordered" evidence="5">
    <location>
        <begin position="778"/>
        <end position="812"/>
    </location>
</feature>
<feature type="region of interest" description="Disordered" evidence="5">
    <location>
        <begin position="896"/>
        <end position="935"/>
    </location>
</feature>
<feature type="compositionally biased region" description="Basic and acidic residues" evidence="5">
    <location>
        <begin position="728"/>
        <end position="751"/>
    </location>
</feature>
<feature type="compositionally biased region" description="Polar residues" evidence="5">
    <location>
        <begin position="755"/>
        <end position="764"/>
    </location>
</feature>
<feature type="compositionally biased region" description="Acidic residues" evidence="5">
    <location>
        <begin position="909"/>
        <end position="922"/>
    </location>
</feature>
<feature type="compositionally biased region" description="Pro residues" evidence="5">
    <location>
        <begin position="925"/>
        <end position="935"/>
    </location>
</feature>
<feature type="binding site" evidence="2">
    <location>
        <position position="103"/>
    </location>
    <ligand>
        <name>Cu(2+)</name>
        <dbReference type="ChEBI" id="CHEBI:29036"/>
        <label>A</label>
    </ligand>
</feature>
<feature type="binding site" evidence="2">
    <location>
        <position position="104"/>
    </location>
    <ligand>
        <name>Cu(2+)</name>
        <dbReference type="ChEBI" id="CHEBI:29036"/>
        <label>A</label>
    </ligand>
</feature>
<feature type="binding site" evidence="2">
    <location>
        <position position="168"/>
    </location>
    <ligand>
        <name>Cu(2+)</name>
        <dbReference type="ChEBI" id="CHEBI:29036"/>
        <label>A</label>
    </ligand>
</feature>
<feature type="binding site" evidence="2">
    <location>
        <position position="238"/>
    </location>
    <ligand>
        <name>Cu(2+)</name>
        <dbReference type="ChEBI" id="CHEBI:29036"/>
        <label>B</label>
    </ligand>
</feature>
<feature type="binding site" evidence="2">
    <location>
        <position position="240"/>
    </location>
    <ligand>
        <name>Cu(2+)</name>
        <dbReference type="ChEBI" id="CHEBI:29036"/>
        <label>B</label>
    </ligand>
</feature>
<feature type="binding site" evidence="2">
    <location>
        <position position="310"/>
    </location>
    <ligand>
        <name>Cu(2+)</name>
        <dbReference type="ChEBI" id="CHEBI:29036"/>
        <label>B</label>
    </ligand>
</feature>
<feature type="binding site" evidence="2">
    <location>
        <position position="426"/>
    </location>
    <ligand>
        <name>a protein</name>
        <dbReference type="ChEBI" id="CHEBI:16541"/>
    </ligand>
    <ligandPart>
        <name>C-terminal Xaa-(2S)-2-hydroxyglycine residue</name>
        <dbReference type="ChEBI" id="CHEBI:142768"/>
    </ligandPart>
</feature>
<feature type="binding site" evidence="2">
    <location>
        <position position="546"/>
    </location>
    <ligand>
        <name>a protein</name>
        <dbReference type="ChEBI" id="CHEBI:16541"/>
    </ligand>
    <ligandPart>
        <name>C-terminal Xaa-(2S)-2-hydroxyglycine residue</name>
        <dbReference type="ChEBI" id="CHEBI:142768"/>
    </ligandPart>
</feature>
<feature type="binding site" evidence="2">
    <location>
        <position position="598"/>
    </location>
    <ligand>
        <name>a protein</name>
        <dbReference type="ChEBI" id="CHEBI:16541"/>
    </ligand>
    <ligandPart>
        <name>C-terminal Xaa-(2S)-2-hydroxyglycine residue</name>
        <dbReference type="ChEBI" id="CHEBI:142768"/>
    </ligandPart>
</feature>
<feature type="glycosylation site" description="N-linked (GlcNAc...) asparagine" evidence="4">
    <location>
        <position position="658"/>
    </location>
</feature>
<feature type="glycosylation site" description="N-linked (GlcNAc...) asparagine" evidence="4">
    <location>
        <position position="739"/>
    </location>
</feature>
<feature type="disulfide bond" evidence="2">
    <location>
        <begin position="43"/>
        <end position="182"/>
    </location>
</feature>
<feature type="disulfide bond" evidence="2">
    <location>
        <begin position="77"/>
        <end position="122"/>
    </location>
</feature>
<feature type="disulfide bond" evidence="2">
    <location>
        <begin position="110"/>
        <end position="127"/>
    </location>
</feature>
<feature type="disulfide bond" evidence="2">
    <location>
        <begin position="223"/>
        <end position="330"/>
    </location>
</feature>
<feature type="disulfide bond" evidence="2">
    <location>
        <begin position="289"/>
        <end position="311"/>
    </location>
</feature>
<feature type="disulfide bond" evidence="2">
    <location>
        <begin position="526"/>
        <end position="547"/>
    </location>
</feature>
<feature type="disulfide bond" evidence="2">
    <location>
        <begin position="594"/>
        <end position="605"/>
    </location>
</feature>
<feature type="splice variant" id="VSP_020312" description="In isoform 2." evidence="7 8">
    <original>DVHLEEDTDW</original>
    <variation>GLITLGDSAV</variation>
    <location>
        <begin position="391"/>
        <end position="400"/>
    </location>
</feature>
<feature type="splice variant" id="VSP_020313" description="In isoform 2." evidence="7 8">
    <location>
        <begin position="401"/>
        <end position="935"/>
    </location>
</feature>
<feature type="sequence conflict" description="In Ref. 2; CAA44615." evidence="9" ref="2">
    <original>P</original>
    <variation>S</variation>
    <location>
        <position position="792"/>
    </location>
</feature>
<proteinExistence type="evidence at protein level"/>
<keyword id="KW-0025">Alternative splicing</keyword>
<keyword id="KW-0186">Copper</keyword>
<keyword id="KW-0968">Cytoplasmic vesicle</keyword>
<keyword id="KW-0903">Direct protein sequencing</keyword>
<keyword id="KW-1015">Disulfide bond</keyword>
<keyword id="KW-0325">Glycoprotein</keyword>
<keyword id="KW-0456">Lyase</keyword>
<keyword id="KW-0472">Membrane</keyword>
<keyword id="KW-0479">Metal-binding</keyword>
<keyword id="KW-0503">Monooxygenase</keyword>
<keyword id="KW-0511">Multifunctional enzyme</keyword>
<keyword id="KW-0560">Oxidoreductase</keyword>
<keyword id="KW-1185">Reference proteome</keyword>
<keyword id="KW-0677">Repeat</keyword>
<keyword id="KW-0732">Signal</keyword>
<keyword id="KW-0812">Transmembrane</keyword>
<keyword id="KW-1133">Transmembrane helix</keyword>
<keyword id="KW-0862">Zinc</keyword>
<name>AMDA_XENLA</name>
<evidence type="ECO:0000250" key="1">
    <source>
        <dbReference type="UniProtKB" id="P10731"/>
    </source>
</evidence>
<evidence type="ECO:0000250" key="2">
    <source>
        <dbReference type="UniProtKB" id="P14925"/>
    </source>
</evidence>
<evidence type="ECO:0000250" key="3">
    <source>
        <dbReference type="UniProtKB" id="P19021"/>
    </source>
</evidence>
<evidence type="ECO:0000255" key="4"/>
<evidence type="ECO:0000256" key="5">
    <source>
        <dbReference type="SAM" id="MobiDB-lite"/>
    </source>
</evidence>
<evidence type="ECO:0000269" key="6">
    <source>
    </source>
</evidence>
<evidence type="ECO:0000303" key="7">
    <source>
    </source>
</evidence>
<evidence type="ECO:0000303" key="8">
    <source ref="3"/>
</evidence>
<evidence type="ECO:0000305" key="9"/>
<protein>
    <recommendedName>
        <fullName>Peptidyl-glycine alpha-amidating monooxygenase A</fullName>
        <shortName>PAM-A</shortName>
    </recommendedName>
    <alternativeName>
        <fullName>Peptide C-terminal alpha-amidating enzyme I</fullName>
        <shortName>AE-I</shortName>
    </alternativeName>
    <alternativeName>
        <fullName>Peptidyl-glycine alpha-amidating monooxygenase I</fullName>
    </alternativeName>
    <domain>
        <recommendedName>
            <fullName>Peptidylglycine alpha-hydroxylating monooxygenase A</fullName>
            <shortName>PHM-A</shortName>
            <ecNumber evidence="2">1.14.17.3</ecNumber>
        </recommendedName>
    </domain>
    <domain>
        <recommendedName>
            <fullName>Peptidyl-alpha-hydroxyglycine alpha-amidating lyase A</fullName>
            <ecNumber>4.3.2.5</ecNumber>
        </recommendedName>
        <alternativeName>
            <fullName>Peptidylamidoglycolate lyase-A</fullName>
            <shortName evidence="2">PAL-A</shortName>
        </alternativeName>
    </domain>
</protein>
<sequence>MASLSSSFLVLFLLFQNSCYCFRSPLSVFKRYEESTRSLSNDCLGTTRPVMSPGSSDYTLDIRMPGVTPTESDTYLCKSYRLPVDDEAYVVDFRPHANMDTAHHMLLFGCNIPSSTDDYWDCSAGTCMDKSSIMYAWAKNAPPTKLPEGVGFRVGGKSGSRYFVLQVHYGNVKAFQDKHKDCTGVTVRVTPEKQPQIAGIYLSMSVDTVIPPGEEAVNSDIACLYNRPTIHPFAYRVHTHQLGQVVSGFRVRHGKWSLIGRQSPQLPQAFYPVEHPVEISPGDIIATRCLFTGKGRTSATYIGGTSNDEMCNLYIMYYMDAAHATSYMTCVQTGEPKLFQNIPEIANVPIPVSPDMMMMMGHGHHHTEAEPEKNTGLQQPKREEEEVLDQDVHLEEDTDWPGVNLKVGQVSGLALDPKNNLAIFHRGDHVWDENSFDRNFVYQQRGIGPIQESTILVVDPSSSKVLKSTGKNLFFLPHGLTIDRDGNYWVTDVALHQVFKLGAGKETPLLVLGRAFQPGSDRKHFCQPTDVAVDPITGNFFVADGYCNSRIMQFSPNGMFIMQWGEETSSNVPRPGQFRIPHSLTMVPDQGQLCVADRENGRIQCFHAETGNFVKQIKHQEFGREVFAVSYAPGGVLYAVNGKPYYGYSAPVQGFMLNFSNGDILDTFIPARKNFDMPHDIAAADDGTVYVGDAHANAVWKFSPSKAEHRSVKKAGIEVEEITETEIFETHIRSRPKTNESVEKQTQEKQQKQKNSAGVSTQEKQNVVQEINAGVPTQEKQNVVQESSAGVPTQEKQSVVQESSAGVSTQEKQSVVQESSAGVSFVLIITLLIIPIAVLIAIAIFIRWRKVRMYGGDIDHKSESSSVGILGKLRGKGSGGLNLGTFFATHKGYSRKGFDRLSTEGSDQEKDDDDGSDSEEEYSAPPIPPAPVSSS</sequence>